<protein>
    <recommendedName>
        <fullName evidence="4">Conotoxin Cal14.13c</fullName>
    </recommendedName>
    <alternativeName>
        <fullName evidence="3">Conotoxin Cal14.1c</fullName>
    </alternativeName>
</protein>
<sequence>MKLCVVXVLLMLAMPFNGGEASRFFNQHARSQRSGMKTRGIWCDPPCPEGETCRGGECSDEFNGDLGG</sequence>
<reference key="1">
    <citation type="journal article" date="2011" name="Toxicon">
        <title>Diversity of conotoxin types from Conus californicus reflects a diversity of prey types and a novel evolutionary history.</title>
        <authorList>
            <person name="Elliger C.A."/>
            <person name="Richmond T.A."/>
            <person name="Lebaric Z.N."/>
            <person name="Pierce N.T."/>
            <person name="Sweedler J.V."/>
            <person name="Gilly W.F."/>
        </authorList>
    </citation>
    <scope>NUCLEOTIDE SEQUENCE [MRNA]</scope>
    <scope>AMIDATION AT LEU-66</scope>
    <source>
        <tissue>Venom duct</tissue>
    </source>
</reference>
<comment type="function">
    <text evidence="4">Probable neurotoxin with unknown target. Possibly targets ion channels.</text>
</comment>
<comment type="subcellular location">
    <subcellularLocation>
        <location evidence="5">Secreted</location>
    </subcellularLocation>
</comment>
<comment type="tissue specificity">
    <text evidence="5">Expressed by the venom duct.</text>
</comment>
<comment type="domain">
    <text>The cysteine framework is XIV (C-C-C-C).</text>
</comment>
<comment type="PTM">
    <text evidence="1">Contains 2 disulfide bonds.</text>
</comment>
<accession>D2Y102</accession>
<keyword id="KW-0027">Amidation</keyword>
<keyword id="KW-1015">Disulfide bond</keyword>
<keyword id="KW-0872">Ion channel impairing toxin</keyword>
<keyword id="KW-0528">Neurotoxin</keyword>
<keyword id="KW-0964">Secreted</keyword>
<keyword id="KW-0732">Signal</keyword>
<keyword id="KW-0800">Toxin</keyword>
<feature type="signal peptide" evidence="2">
    <location>
        <begin position="1"/>
        <end position="20"/>
    </location>
</feature>
<feature type="propeptide" id="PRO_5000566277" evidence="5">
    <location>
        <begin position="21"/>
        <end position="68"/>
    </location>
</feature>
<feature type="peptide" id="PRO_5000566278" description="Conotoxin Cal14.13c" evidence="5">
    <location>
        <begin position="40"/>
        <end position="66"/>
    </location>
</feature>
<feature type="modified residue" description="Leucine amide" evidence="5">
    <location>
        <position position="66"/>
    </location>
</feature>
<dbReference type="EMBL" id="GU289670">
    <property type="protein sequence ID" value="ADB28954.1"/>
    <property type="molecule type" value="mRNA"/>
</dbReference>
<dbReference type="ConoServer" id="3979">
    <property type="toxin name" value="Cal14.13c precursor"/>
</dbReference>
<dbReference type="GO" id="GO:0005576">
    <property type="term" value="C:extracellular region"/>
    <property type="evidence" value="ECO:0007669"/>
    <property type="project" value="UniProtKB-SubCell"/>
</dbReference>
<dbReference type="GO" id="GO:0099106">
    <property type="term" value="F:ion channel regulator activity"/>
    <property type="evidence" value="ECO:0007669"/>
    <property type="project" value="UniProtKB-KW"/>
</dbReference>
<dbReference type="GO" id="GO:0090729">
    <property type="term" value="F:toxin activity"/>
    <property type="evidence" value="ECO:0007669"/>
    <property type="project" value="UniProtKB-KW"/>
</dbReference>
<organism>
    <name type="scientific">Californiconus californicus</name>
    <name type="common">California cone</name>
    <name type="synonym">Conus californicus</name>
    <dbReference type="NCBI Taxonomy" id="1736779"/>
    <lineage>
        <taxon>Eukaryota</taxon>
        <taxon>Metazoa</taxon>
        <taxon>Spiralia</taxon>
        <taxon>Lophotrochozoa</taxon>
        <taxon>Mollusca</taxon>
        <taxon>Gastropoda</taxon>
        <taxon>Caenogastropoda</taxon>
        <taxon>Neogastropoda</taxon>
        <taxon>Conoidea</taxon>
        <taxon>Conidae</taxon>
        <taxon>Californiconus</taxon>
    </lineage>
</organism>
<name>CUEDC_CONCL</name>
<evidence type="ECO:0000250" key="1"/>
<evidence type="ECO:0000255" key="2"/>
<evidence type="ECO:0000303" key="3">
    <source>
    </source>
</evidence>
<evidence type="ECO:0000305" key="4"/>
<evidence type="ECO:0000305" key="5">
    <source>
    </source>
</evidence>
<proteinExistence type="evidence at protein level"/>